<reference key="1">
    <citation type="journal article" date="2003" name="Genome Res.">
        <title>Comparative complete genome sequence analysis of the amino acid replacements responsible for the thermostability of Corynebacterium efficiens.</title>
        <authorList>
            <person name="Nishio Y."/>
            <person name="Nakamura Y."/>
            <person name="Kawarabayasi Y."/>
            <person name="Usuda Y."/>
            <person name="Kimura E."/>
            <person name="Sugimoto S."/>
            <person name="Matsui K."/>
            <person name="Yamagishi A."/>
            <person name="Kikuchi H."/>
            <person name="Ikeo K."/>
            <person name="Gojobori T."/>
        </authorList>
    </citation>
    <scope>NUCLEOTIDE SEQUENCE [LARGE SCALE GENOMIC DNA]</scope>
    <source>
        <strain>DSM 44549 / YS-314 / AJ 12310 / JCM 11189 / NBRC 100395</strain>
    </source>
</reference>
<organism>
    <name type="scientific">Corynebacterium efficiens (strain DSM 44549 / YS-314 / AJ 12310 / JCM 11189 / NBRC 100395)</name>
    <dbReference type="NCBI Taxonomy" id="196164"/>
    <lineage>
        <taxon>Bacteria</taxon>
        <taxon>Bacillati</taxon>
        <taxon>Actinomycetota</taxon>
        <taxon>Actinomycetes</taxon>
        <taxon>Mycobacteriales</taxon>
        <taxon>Corynebacteriaceae</taxon>
        <taxon>Corynebacterium</taxon>
    </lineage>
</organism>
<sequence length="537" mass="56803">MAKLIAFDQDAREGILRGVDALANTVKVTLGPRGRNVVLDKAFGGPLVTNDGVTIARDIDVEDPFENLGAQLVKSVAVKTNDIAGDGTTTATLLAQALIAEGLRNVAAGANPIELNKGIEAATQKTLDELRARATPISAPQEVASVATVSSRDEVVGKIVAEAMEKVGKDGVVTVEESQSLETTLDITEGISFDKGYLSPYFINDTDTQTAVLENPAILLVRNKISSLPDFLPLLEKIVESNRPVLIIAEDIEGEPLQTLVVNSIRKTIKAVAVKSPYFGDRRKAFMDDLAVVTNATVVDPEVGINLSEAGVEVLGTARRVTVSKDETILVDGAGDAEAVEARRQQIRREIETTDSTWDREKAEERLAKLSGGVAVIRVGAATETEVNERKLRVEDAINAARAAAQEGIIAGGGSALVQIAETLKAYAEEFEGDQKVGIRALAAALSKPAYWIAANAGLDGAVIVARIADLPNNEGFNAATLEYGNLVDQGVIDPVKVTHSAVVNASSVARMVLTTEASIVDKPAEETADHGHGHHH</sequence>
<keyword id="KW-0067">ATP-binding</keyword>
<keyword id="KW-0143">Chaperone</keyword>
<keyword id="KW-0963">Cytoplasm</keyword>
<keyword id="KW-0413">Isomerase</keyword>
<keyword id="KW-0547">Nucleotide-binding</keyword>
<keyword id="KW-1185">Reference proteome</keyword>
<feature type="chain" id="PRO_0000063349" description="Chaperonin GroEL 1">
    <location>
        <begin position="1"/>
        <end position="537"/>
    </location>
</feature>
<feature type="binding site" evidence="1">
    <location>
        <begin position="29"/>
        <end position="32"/>
    </location>
    <ligand>
        <name>ATP</name>
        <dbReference type="ChEBI" id="CHEBI:30616"/>
    </ligand>
</feature>
<feature type="binding site" evidence="1">
    <location>
        <begin position="86"/>
        <end position="90"/>
    </location>
    <ligand>
        <name>ATP</name>
        <dbReference type="ChEBI" id="CHEBI:30616"/>
    </ligand>
</feature>
<feature type="binding site" evidence="1">
    <location>
        <position position="413"/>
    </location>
    <ligand>
        <name>ATP</name>
        <dbReference type="ChEBI" id="CHEBI:30616"/>
    </ligand>
</feature>
<feature type="binding site" evidence="1">
    <location>
        <begin position="478"/>
        <end position="480"/>
    </location>
    <ligand>
        <name>ATP</name>
        <dbReference type="ChEBI" id="CHEBI:30616"/>
    </ligand>
</feature>
<feature type="binding site" evidence="1">
    <location>
        <position position="494"/>
    </location>
    <ligand>
        <name>ATP</name>
        <dbReference type="ChEBI" id="CHEBI:30616"/>
    </ligand>
</feature>
<proteinExistence type="inferred from homology"/>
<accession>Q8CY27</accession>
<name>CH601_COREF</name>
<protein>
    <recommendedName>
        <fullName evidence="1">Chaperonin GroEL 1</fullName>
        <ecNumber evidence="1">5.6.1.7</ecNumber>
    </recommendedName>
    <alternativeName>
        <fullName evidence="1">60 kDa chaperonin 1</fullName>
    </alternativeName>
    <alternativeName>
        <fullName evidence="1">Chaperonin-60 1</fullName>
        <shortName evidence="1">Cpn60 1</shortName>
    </alternativeName>
</protein>
<gene>
    <name evidence="1" type="primary">groEL1</name>
    <name evidence="1" type="synonym">groL1</name>
    <name type="ordered locus">CE0602</name>
</gene>
<comment type="function">
    <text evidence="1">Together with its co-chaperonin GroES, plays an essential role in assisting protein folding. The GroEL-GroES system forms a nano-cage that allows encapsulation of the non-native substrate proteins and provides a physical environment optimized to promote and accelerate protein folding.</text>
</comment>
<comment type="catalytic activity">
    <reaction evidence="1">
        <text>ATP + H2O + a folded polypeptide = ADP + phosphate + an unfolded polypeptide.</text>
        <dbReference type="EC" id="5.6.1.7"/>
    </reaction>
</comment>
<comment type="subunit">
    <text evidence="1">Forms a cylinder of 14 subunits composed of two heptameric rings stacked back-to-back. Interacts with the co-chaperonin GroES.</text>
</comment>
<comment type="subcellular location">
    <subcellularLocation>
        <location evidence="1">Cytoplasm</location>
    </subcellularLocation>
</comment>
<comment type="similarity">
    <text evidence="1">Belongs to the chaperonin (HSP60) family.</text>
</comment>
<dbReference type="EC" id="5.6.1.7" evidence="1"/>
<dbReference type="EMBL" id="BA000035">
    <property type="protein sequence ID" value="BAC17412.1"/>
    <property type="molecule type" value="Genomic_DNA"/>
</dbReference>
<dbReference type="RefSeq" id="WP_006769721.1">
    <property type="nucleotide sequence ID" value="NC_004369.1"/>
</dbReference>
<dbReference type="SMR" id="Q8CY27"/>
<dbReference type="STRING" id="196164.gene:10741004"/>
<dbReference type="KEGG" id="cef:CE0602"/>
<dbReference type="eggNOG" id="COG0459">
    <property type="taxonomic scope" value="Bacteria"/>
</dbReference>
<dbReference type="HOGENOM" id="CLU_016503_3_0_11"/>
<dbReference type="OrthoDB" id="9766614at2"/>
<dbReference type="Proteomes" id="UP000001409">
    <property type="component" value="Chromosome"/>
</dbReference>
<dbReference type="GO" id="GO:0005737">
    <property type="term" value="C:cytoplasm"/>
    <property type="evidence" value="ECO:0007669"/>
    <property type="project" value="UniProtKB-SubCell"/>
</dbReference>
<dbReference type="GO" id="GO:0005524">
    <property type="term" value="F:ATP binding"/>
    <property type="evidence" value="ECO:0007669"/>
    <property type="project" value="UniProtKB-UniRule"/>
</dbReference>
<dbReference type="GO" id="GO:0140662">
    <property type="term" value="F:ATP-dependent protein folding chaperone"/>
    <property type="evidence" value="ECO:0007669"/>
    <property type="project" value="InterPro"/>
</dbReference>
<dbReference type="GO" id="GO:0016853">
    <property type="term" value="F:isomerase activity"/>
    <property type="evidence" value="ECO:0007669"/>
    <property type="project" value="UniProtKB-KW"/>
</dbReference>
<dbReference type="GO" id="GO:0051082">
    <property type="term" value="F:unfolded protein binding"/>
    <property type="evidence" value="ECO:0007669"/>
    <property type="project" value="UniProtKB-UniRule"/>
</dbReference>
<dbReference type="GO" id="GO:0042026">
    <property type="term" value="P:protein refolding"/>
    <property type="evidence" value="ECO:0007669"/>
    <property type="project" value="UniProtKB-UniRule"/>
</dbReference>
<dbReference type="CDD" id="cd03344">
    <property type="entry name" value="GroEL"/>
    <property type="match status" value="1"/>
</dbReference>
<dbReference type="FunFam" id="3.50.7.10:FF:000001">
    <property type="entry name" value="60 kDa chaperonin"/>
    <property type="match status" value="1"/>
</dbReference>
<dbReference type="Gene3D" id="3.50.7.10">
    <property type="entry name" value="GroEL"/>
    <property type="match status" value="1"/>
</dbReference>
<dbReference type="Gene3D" id="1.10.560.10">
    <property type="entry name" value="GroEL-like equatorial domain"/>
    <property type="match status" value="1"/>
</dbReference>
<dbReference type="Gene3D" id="3.30.260.10">
    <property type="entry name" value="TCP-1-like chaperonin intermediate domain"/>
    <property type="match status" value="1"/>
</dbReference>
<dbReference type="HAMAP" id="MF_00600">
    <property type="entry name" value="CH60"/>
    <property type="match status" value="1"/>
</dbReference>
<dbReference type="InterPro" id="IPR018370">
    <property type="entry name" value="Chaperonin_Cpn60_CS"/>
</dbReference>
<dbReference type="InterPro" id="IPR001844">
    <property type="entry name" value="Cpn60/GroEL"/>
</dbReference>
<dbReference type="InterPro" id="IPR002423">
    <property type="entry name" value="Cpn60/GroEL/TCP-1"/>
</dbReference>
<dbReference type="InterPro" id="IPR027409">
    <property type="entry name" value="GroEL-like_apical_dom_sf"/>
</dbReference>
<dbReference type="InterPro" id="IPR027413">
    <property type="entry name" value="GROEL-like_equatorial_sf"/>
</dbReference>
<dbReference type="InterPro" id="IPR027410">
    <property type="entry name" value="TCP-1-like_intermed_sf"/>
</dbReference>
<dbReference type="NCBIfam" id="TIGR02348">
    <property type="entry name" value="GroEL"/>
    <property type="match status" value="1"/>
</dbReference>
<dbReference type="NCBIfam" id="NF000592">
    <property type="entry name" value="PRK00013.1"/>
    <property type="match status" value="1"/>
</dbReference>
<dbReference type="NCBIfam" id="NF009487">
    <property type="entry name" value="PRK12849.1"/>
    <property type="match status" value="1"/>
</dbReference>
<dbReference type="NCBIfam" id="NF009488">
    <property type="entry name" value="PRK12850.1"/>
    <property type="match status" value="1"/>
</dbReference>
<dbReference type="NCBIfam" id="NF009489">
    <property type="entry name" value="PRK12851.1"/>
    <property type="match status" value="1"/>
</dbReference>
<dbReference type="PANTHER" id="PTHR45633">
    <property type="entry name" value="60 KDA HEAT SHOCK PROTEIN, MITOCHONDRIAL"/>
    <property type="match status" value="1"/>
</dbReference>
<dbReference type="Pfam" id="PF00118">
    <property type="entry name" value="Cpn60_TCP1"/>
    <property type="match status" value="1"/>
</dbReference>
<dbReference type="PRINTS" id="PR00298">
    <property type="entry name" value="CHAPERONIN60"/>
</dbReference>
<dbReference type="SUPFAM" id="SSF52029">
    <property type="entry name" value="GroEL apical domain-like"/>
    <property type="match status" value="1"/>
</dbReference>
<dbReference type="SUPFAM" id="SSF48592">
    <property type="entry name" value="GroEL equatorial domain-like"/>
    <property type="match status" value="2"/>
</dbReference>
<dbReference type="PROSITE" id="PS00296">
    <property type="entry name" value="CHAPERONINS_CPN60"/>
    <property type="match status" value="1"/>
</dbReference>
<evidence type="ECO:0000255" key="1">
    <source>
        <dbReference type="HAMAP-Rule" id="MF_00600"/>
    </source>
</evidence>